<keyword id="KW-0903">Direct protein sequencing</keyword>
<keyword id="KW-0369">Histidine metabolism</keyword>
<keyword id="KW-0378">Hydrolase</keyword>
<keyword id="KW-0464">Manganese</keyword>
<keyword id="KW-0479">Metal-binding</keyword>
<keyword id="KW-1185">Reference proteome</keyword>
<accession>Q9HZ59</accession>
<comment type="function">
    <text evidence="1 2">Catalyzes the conversion of N-formimidoyl-L-glutamate to L-glutamate and formamide.</text>
</comment>
<comment type="catalytic activity">
    <reaction evidence="1 2">
        <text>N-formimidoyl-L-glutamate + H2O = formamide + L-glutamate</text>
        <dbReference type="Rhea" id="RHEA:22492"/>
        <dbReference type="ChEBI" id="CHEBI:15377"/>
        <dbReference type="ChEBI" id="CHEBI:16397"/>
        <dbReference type="ChEBI" id="CHEBI:29985"/>
        <dbReference type="ChEBI" id="CHEBI:58928"/>
        <dbReference type="EC" id="3.5.3.8"/>
    </reaction>
</comment>
<comment type="cofactor">
    <cofactor evidence="1 2">
        <name>Mn(2+)</name>
        <dbReference type="ChEBI" id="CHEBI:29035"/>
    </cofactor>
    <text evidence="1 2">Binds 2 manganese ions per subunit (By similarity). Can also use Zn(2+) (PubMed:16475788).</text>
</comment>
<comment type="biophysicochemical properties">
    <kinetics>
        <KM evidence="2">4.3 mM for N-formimidoyl-L-glutamate</KM>
        <text evidence="2">kcat is 73 sec(-1).</text>
    </kinetics>
</comment>
<comment type="pathway">
    <text evidence="1 2">Amino-acid degradation; L-histidine degradation into L-glutamate; L-glutamate from N-formimidoyl-L-glutamate (hydrolase route): step 1/1.</text>
</comment>
<comment type="subunit">
    <text evidence="2">Homodimer.</text>
</comment>
<comment type="miscellaneous">
    <text evidence="3">There appear to be two competing pathways for the degradation of N-formimino-L-glutamate in P.aeruginosa: the two-step degradation of N-formimino-L-glutamate to ammonia, formate, and L-glutamate (via HutF and HutG), and the direct hydrolysis of the formimino functional group of N-formimino-L-glutamate to produce formamide and L-glutamate (via PA3175).</text>
</comment>
<comment type="similarity">
    <text evidence="1">Belongs to the arginase family.</text>
</comment>
<reference key="1">
    <citation type="journal article" date="2000" name="Nature">
        <title>Complete genome sequence of Pseudomonas aeruginosa PAO1, an opportunistic pathogen.</title>
        <authorList>
            <person name="Stover C.K."/>
            <person name="Pham X.-Q.T."/>
            <person name="Erwin A.L."/>
            <person name="Mizoguchi S.D."/>
            <person name="Warrener P."/>
            <person name="Hickey M.J."/>
            <person name="Brinkman F.S.L."/>
            <person name="Hufnagle W.O."/>
            <person name="Kowalik D.J."/>
            <person name="Lagrou M."/>
            <person name="Garber R.L."/>
            <person name="Goltry L."/>
            <person name="Tolentino E."/>
            <person name="Westbrock-Wadman S."/>
            <person name="Yuan Y."/>
            <person name="Brody L.L."/>
            <person name="Coulter S.N."/>
            <person name="Folger K.R."/>
            <person name="Kas A."/>
            <person name="Larbig K."/>
            <person name="Lim R.M."/>
            <person name="Smith K.A."/>
            <person name="Spencer D.H."/>
            <person name="Wong G.K.-S."/>
            <person name="Wu Z."/>
            <person name="Paulsen I.T."/>
            <person name="Reizer J."/>
            <person name="Saier M.H. Jr."/>
            <person name="Hancock R.E.W."/>
            <person name="Lory S."/>
            <person name="Olson M.V."/>
        </authorList>
    </citation>
    <scope>NUCLEOTIDE SEQUENCE [LARGE SCALE GENOMIC DNA]</scope>
    <source>
        <strain>ATCC 15692 / DSM 22644 / CIP 104116 / JCM 14847 / LMG 12228 / 1C / PRS 101 / PAO1</strain>
    </source>
</reference>
<reference key="2">
    <citation type="journal article" date="2006" name="Biochemistry">
        <title>Annotating enzymes of unknown function: N-formimino-L-glutamate deiminase is a member of the amidohydrolase superfamily.</title>
        <authorList>
            <person name="Marti-Arbona R."/>
            <person name="Xu C."/>
            <person name="Steele S."/>
            <person name="Weeks A."/>
            <person name="Kuty G.F."/>
            <person name="Seibert C.M."/>
            <person name="Raushel F.M."/>
        </authorList>
    </citation>
    <scope>PROTEIN SEQUENCE OF 1-6</scope>
    <scope>FUNCTION</scope>
    <scope>CATALYTIC ACTIVITY</scope>
    <scope>COFACTOR</scope>
    <scope>BIOPHYSICOCHEMICAL PROPERTIES</scope>
    <scope>PATHWAY</scope>
    <scope>SUBUNIT</scope>
</reference>
<protein>
    <recommendedName>
        <fullName evidence="1">Formimidoylglutamase</fullName>
        <ecNumber evidence="1 2">3.5.3.8</ecNumber>
    </recommendedName>
    <alternativeName>
        <fullName evidence="1">Formiminoglutamase</fullName>
    </alternativeName>
    <alternativeName>
        <fullName evidence="1">Formiminoglutamate hydrolase</fullName>
    </alternativeName>
</protein>
<organism>
    <name type="scientific">Pseudomonas aeruginosa (strain ATCC 15692 / DSM 22644 / CIP 104116 / JCM 14847 / LMG 12228 / 1C / PRS 101 / PAO1)</name>
    <dbReference type="NCBI Taxonomy" id="208964"/>
    <lineage>
        <taxon>Bacteria</taxon>
        <taxon>Pseudomonadati</taxon>
        <taxon>Pseudomonadota</taxon>
        <taxon>Gammaproteobacteria</taxon>
        <taxon>Pseudomonadales</taxon>
        <taxon>Pseudomonadaceae</taxon>
        <taxon>Pseudomonas</taxon>
    </lineage>
</organism>
<evidence type="ECO:0000255" key="1">
    <source>
        <dbReference type="HAMAP-Rule" id="MF_00737"/>
    </source>
</evidence>
<evidence type="ECO:0000269" key="2">
    <source>
    </source>
</evidence>
<evidence type="ECO:0000305" key="3">
    <source>
    </source>
</evidence>
<name>HUTGL_PSEAE</name>
<feature type="chain" id="PRO_0000173762" description="Formimidoylglutamase">
    <location>
        <begin position="1"/>
        <end position="311"/>
    </location>
</feature>
<feature type="binding site" evidence="1">
    <location>
        <position position="122"/>
    </location>
    <ligand>
        <name>Mn(2+)</name>
        <dbReference type="ChEBI" id="CHEBI:29035"/>
        <label>1</label>
    </ligand>
</feature>
<feature type="binding site" evidence="1">
    <location>
        <position position="151"/>
    </location>
    <ligand>
        <name>Mn(2+)</name>
        <dbReference type="ChEBI" id="CHEBI:29035"/>
        <label>1</label>
    </ligand>
</feature>
<feature type="binding site" evidence="1">
    <location>
        <position position="151"/>
    </location>
    <ligand>
        <name>Mn(2+)</name>
        <dbReference type="ChEBI" id="CHEBI:29035"/>
        <label>2</label>
    </ligand>
</feature>
<feature type="binding site" evidence="1">
    <location>
        <position position="153"/>
    </location>
    <ligand>
        <name>Mn(2+)</name>
        <dbReference type="ChEBI" id="CHEBI:29035"/>
        <label>2</label>
    </ligand>
</feature>
<feature type="binding site" evidence="1">
    <location>
        <position position="155"/>
    </location>
    <ligand>
        <name>Mn(2+)</name>
        <dbReference type="ChEBI" id="CHEBI:29035"/>
        <label>1</label>
    </ligand>
</feature>
<feature type="binding site" evidence="1">
    <location>
        <position position="242"/>
    </location>
    <ligand>
        <name>Mn(2+)</name>
        <dbReference type="ChEBI" id="CHEBI:29035"/>
        <label>1</label>
    </ligand>
</feature>
<feature type="binding site" evidence="1">
    <location>
        <position position="242"/>
    </location>
    <ligand>
        <name>Mn(2+)</name>
        <dbReference type="ChEBI" id="CHEBI:29035"/>
        <label>2</label>
    </ligand>
</feature>
<feature type="binding site" evidence="1">
    <location>
        <position position="244"/>
    </location>
    <ligand>
        <name>Mn(2+)</name>
        <dbReference type="ChEBI" id="CHEBI:29035"/>
        <label>2</label>
    </ligand>
</feature>
<proteinExistence type="evidence at protein level"/>
<sequence>MYPAPDMSLWQGRIDSQEGADARRWHQWMRPYADDAEAASVLLGFASDEGVRRNQGRQGARHGPPALRRALANLAWHGEQAIYDAGDIVAGDDLEAAQECYAQRVADLLACGHRVVGLGGGHEIAYASFAGLARHLSRHERLPRIGILNFDAHFDLRHAERASSGTPFRQIAELCQASDWPFAYCCLGISRLSNTAALFDQAQRLGVRYLLDRQLQPWNLERSEAFLDGFLQSVDHLYLTVCLDVLPAAQAPGVSAPSAHGVEMPVVEHLVRRAKASGKLRLADIAELNPQLDSDQRTARIAARLVDSLVN</sequence>
<gene>
    <name type="ordered locus">PA3175</name>
</gene>
<dbReference type="EC" id="3.5.3.8" evidence="1 2"/>
<dbReference type="EMBL" id="AE004091">
    <property type="protein sequence ID" value="AAG06563.1"/>
    <property type="molecule type" value="Genomic_DNA"/>
</dbReference>
<dbReference type="PIR" id="G83249">
    <property type="entry name" value="G83249"/>
</dbReference>
<dbReference type="RefSeq" id="NP_251865.1">
    <property type="nucleotide sequence ID" value="NC_002516.2"/>
</dbReference>
<dbReference type="SMR" id="Q9HZ59"/>
<dbReference type="STRING" id="208964.PA3175"/>
<dbReference type="PaxDb" id="208964-PA3175"/>
<dbReference type="GeneID" id="882685"/>
<dbReference type="KEGG" id="pae:PA3175"/>
<dbReference type="PATRIC" id="fig|208964.12.peg.3318"/>
<dbReference type="PseudoCAP" id="PA3175"/>
<dbReference type="HOGENOM" id="CLU_039478_2_0_6"/>
<dbReference type="InParanoid" id="Q9HZ59"/>
<dbReference type="OrthoDB" id="9789727at2"/>
<dbReference type="PhylomeDB" id="Q9HZ59"/>
<dbReference type="BioCyc" id="PAER208964:G1FZ6-3235-MONOMER"/>
<dbReference type="UniPathway" id="UPA00379">
    <property type="reaction ID" value="UER00552"/>
</dbReference>
<dbReference type="Proteomes" id="UP000002438">
    <property type="component" value="Chromosome"/>
</dbReference>
<dbReference type="GO" id="GO:0008783">
    <property type="term" value="F:agmatinase activity"/>
    <property type="evidence" value="ECO:0000318"/>
    <property type="project" value="GO_Central"/>
</dbReference>
<dbReference type="GO" id="GO:0050415">
    <property type="term" value="F:formimidoylglutamase activity"/>
    <property type="evidence" value="ECO:0000314"/>
    <property type="project" value="PseudoCAP"/>
</dbReference>
<dbReference type="GO" id="GO:0030145">
    <property type="term" value="F:manganese ion binding"/>
    <property type="evidence" value="ECO:0007669"/>
    <property type="project" value="UniProtKB-UniRule"/>
</dbReference>
<dbReference type="GO" id="GO:0006548">
    <property type="term" value="P:L-histidine catabolic process"/>
    <property type="evidence" value="ECO:0000315"/>
    <property type="project" value="PseudoCAP"/>
</dbReference>
<dbReference type="GO" id="GO:0019556">
    <property type="term" value="P:L-histidine catabolic process to glutamate and formamide"/>
    <property type="evidence" value="ECO:0007669"/>
    <property type="project" value="UniProtKB-UniPathway"/>
</dbReference>
<dbReference type="GO" id="GO:0019557">
    <property type="term" value="P:L-histidine catabolic process to glutamate and formate"/>
    <property type="evidence" value="ECO:0007669"/>
    <property type="project" value="UniProtKB-UniPathway"/>
</dbReference>
<dbReference type="GO" id="GO:0033389">
    <property type="term" value="P:putrescine biosynthetic process from arginine, via agmatine"/>
    <property type="evidence" value="ECO:0000318"/>
    <property type="project" value="GO_Central"/>
</dbReference>
<dbReference type="CDD" id="cd09988">
    <property type="entry name" value="Formimidoylglutamase"/>
    <property type="match status" value="1"/>
</dbReference>
<dbReference type="Gene3D" id="3.40.800.10">
    <property type="entry name" value="Ureohydrolase domain"/>
    <property type="match status" value="1"/>
</dbReference>
<dbReference type="HAMAP" id="MF_00737">
    <property type="entry name" value="Formimidoylglutam"/>
    <property type="match status" value="1"/>
</dbReference>
<dbReference type="InterPro" id="IPR005923">
    <property type="entry name" value="HutG"/>
</dbReference>
<dbReference type="InterPro" id="IPR006035">
    <property type="entry name" value="Ureohydrolase"/>
</dbReference>
<dbReference type="InterPro" id="IPR023696">
    <property type="entry name" value="Ureohydrolase_dom_sf"/>
</dbReference>
<dbReference type="NCBIfam" id="TIGR01227">
    <property type="entry name" value="hutG"/>
    <property type="match status" value="1"/>
</dbReference>
<dbReference type="PANTHER" id="PTHR11358">
    <property type="entry name" value="ARGINASE/AGMATINASE"/>
    <property type="match status" value="1"/>
</dbReference>
<dbReference type="PANTHER" id="PTHR11358:SF35">
    <property type="entry name" value="FORMIMIDOYLGLUTAMASE"/>
    <property type="match status" value="1"/>
</dbReference>
<dbReference type="Pfam" id="PF00491">
    <property type="entry name" value="Arginase"/>
    <property type="match status" value="1"/>
</dbReference>
<dbReference type="PIRSF" id="PIRSF036979">
    <property type="entry name" value="Arginase"/>
    <property type="match status" value="1"/>
</dbReference>
<dbReference type="SUPFAM" id="SSF52768">
    <property type="entry name" value="Arginase/deacetylase"/>
    <property type="match status" value="1"/>
</dbReference>
<dbReference type="PROSITE" id="PS51409">
    <property type="entry name" value="ARGINASE_2"/>
    <property type="match status" value="1"/>
</dbReference>